<organism>
    <name type="scientific">Mycobacterium marinum (strain ATCC BAA-535 / M)</name>
    <dbReference type="NCBI Taxonomy" id="216594"/>
    <lineage>
        <taxon>Bacteria</taxon>
        <taxon>Bacillati</taxon>
        <taxon>Actinomycetota</taxon>
        <taxon>Actinomycetes</taxon>
        <taxon>Mycobacteriales</taxon>
        <taxon>Mycobacteriaceae</taxon>
        <taxon>Mycobacterium</taxon>
        <taxon>Mycobacterium ulcerans group</taxon>
    </lineage>
</organism>
<keyword id="KW-0378">Hydrolase</keyword>
<keyword id="KW-0460">Magnesium</keyword>
<keyword id="KW-0479">Metal-binding</keyword>
<keyword id="KW-1185">Reference proteome</keyword>
<evidence type="ECO:0000250" key="1"/>
<evidence type="ECO:0000305" key="2"/>
<feature type="chain" id="PRO_0000370704" description="Trehalose-phosphate phosphatase">
    <location>
        <begin position="1"/>
        <end position="390"/>
    </location>
</feature>
<feature type="active site" description="Nucleophile" evidence="1">
    <location>
        <position position="150"/>
    </location>
</feature>
<feature type="binding site" evidence="1">
    <location>
        <begin position="150"/>
        <end position="152"/>
    </location>
    <ligand>
        <name>substrate</name>
    </ligand>
</feature>
<feature type="binding site" evidence="1">
    <location>
        <position position="150"/>
    </location>
    <ligand>
        <name>Mg(2+)</name>
        <dbReference type="ChEBI" id="CHEBI:18420"/>
    </ligand>
</feature>
<feature type="binding site" evidence="1">
    <location>
        <position position="152"/>
    </location>
    <ligand>
        <name>Mg(2+)</name>
        <dbReference type="ChEBI" id="CHEBI:18420"/>
    </ligand>
</feature>
<feature type="binding site" evidence="1">
    <location>
        <position position="333"/>
    </location>
    <ligand>
        <name>Mg(2+)</name>
        <dbReference type="ChEBI" id="CHEBI:18420"/>
    </ligand>
</feature>
<comment type="function">
    <text evidence="1">Removes the phosphate from trehalose 6-phosphate to produce free trehalose.</text>
</comment>
<comment type="catalytic activity">
    <reaction>
        <text>alpha,alpha-trehalose 6-phosphate + H2O = alpha,alpha-trehalose + phosphate</text>
        <dbReference type="Rhea" id="RHEA:23420"/>
        <dbReference type="ChEBI" id="CHEBI:15377"/>
        <dbReference type="ChEBI" id="CHEBI:16551"/>
        <dbReference type="ChEBI" id="CHEBI:43474"/>
        <dbReference type="ChEBI" id="CHEBI:58429"/>
        <dbReference type="EC" id="3.1.3.12"/>
    </reaction>
</comment>
<comment type="cofactor">
    <cofactor evidence="1">
        <name>Mg(2+)</name>
        <dbReference type="ChEBI" id="CHEBI:18420"/>
    </cofactor>
</comment>
<comment type="pathway">
    <text>Glycan biosynthesis; trehalose biosynthesis.</text>
</comment>
<comment type="similarity">
    <text evidence="2">Belongs to the trehalose phosphatase family.</text>
</comment>
<name>OTSB_MYCMM</name>
<proteinExistence type="inferred from homology"/>
<sequence length="390" mass="41049">MSVTIDPRRHDAVLFDTALNSTQALVRQLQQARVGTATFASGGGGHDAAIQALTESADRVGARPGRCVVITADAASVAAARDSGFALVIGVDQAGHRDALPDHGADTVLADLDEVRVRAGDRHMSELPDALQALGRPDGLTVPRPAVFFDFDGTLSEIVDDPDAATPTAGAVAALQQLAAQCPVAILSGRDLADVSQRVGLPGIWYAGSHGFELTAPDGTHHQNEAAAAAIPVLEQAAAQLRDRLGSIPGVMVEHKRFGVATHYRNAARDRVGEIAAVVRAAGQRDGLRVTTGREVIELRPDIDWDKGKTLRWVIDHLPDQRAAPLVPIYLGDDITDEDAFDAVGPNGVAIMVRHNEDGDRATAALFALESPARVAEFTGRLASQLSTLG</sequence>
<dbReference type="EC" id="3.1.3.12"/>
<dbReference type="EMBL" id="CP000854">
    <property type="protein sequence ID" value="ACC39614.1"/>
    <property type="molecule type" value="Genomic_DNA"/>
</dbReference>
<dbReference type="RefSeq" id="WP_012393039.1">
    <property type="nucleotide sequence ID" value="NC_010612.1"/>
</dbReference>
<dbReference type="SMR" id="B2HDP8"/>
<dbReference type="STRING" id="216594.MMAR_1156"/>
<dbReference type="KEGG" id="mmi:MMAR_1156"/>
<dbReference type="eggNOG" id="COG0561">
    <property type="taxonomic scope" value="Bacteria"/>
</dbReference>
<dbReference type="eggNOG" id="COG0637">
    <property type="taxonomic scope" value="Bacteria"/>
</dbReference>
<dbReference type="HOGENOM" id="CLU_037265_4_1_11"/>
<dbReference type="OrthoDB" id="9816160at2"/>
<dbReference type="UniPathway" id="UPA00299"/>
<dbReference type="Proteomes" id="UP000001190">
    <property type="component" value="Chromosome"/>
</dbReference>
<dbReference type="GO" id="GO:0046872">
    <property type="term" value="F:metal ion binding"/>
    <property type="evidence" value="ECO:0007669"/>
    <property type="project" value="UniProtKB-KW"/>
</dbReference>
<dbReference type="GO" id="GO:0004805">
    <property type="term" value="F:trehalose-phosphatase activity"/>
    <property type="evidence" value="ECO:0007669"/>
    <property type="project" value="UniProtKB-EC"/>
</dbReference>
<dbReference type="GO" id="GO:0005992">
    <property type="term" value="P:trehalose biosynthetic process"/>
    <property type="evidence" value="ECO:0007669"/>
    <property type="project" value="UniProtKB-UniPathway"/>
</dbReference>
<dbReference type="CDD" id="cd01627">
    <property type="entry name" value="HAD_TPP"/>
    <property type="match status" value="1"/>
</dbReference>
<dbReference type="FunFam" id="3.30.70.1020:FF:000007">
    <property type="entry name" value="Trehalose 6-phosphate phosphatase"/>
    <property type="match status" value="1"/>
</dbReference>
<dbReference type="Gene3D" id="3.40.50.1000">
    <property type="entry name" value="HAD superfamily/HAD-like"/>
    <property type="match status" value="2"/>
</dbReference>
<dbReference type="Gene3D" id="3.30.70.1020">
    <property type="entry name" value="Trehalose-6-phosphate phosphatase related protein, domain 2"/>
    <property type="match status" value="1"/>
</dbReference>
<dbReference type="InterPro" id="IPR036412">
    <property type="entry name" value="HAD-like_sf"/>
</dbReference>
<dbReference type="InterPro" id="IPR006379">
    <property type="entry name" value="HAD-SF_hydro_IIB"/>
</dbReference>
<dbReference type="InterPro" id="IPR023214">
    <property type="entry name" value="HAD_sf"/>
</dbReference>
<dbReference type="InterPro" id="IPR044651">
    <property type="entry name" value="OTSB-like"/>
</dbReference>
<dbReference type="InterPro" id="IPR003337">
    <property type="entry name" value="Trehalose_PPase"/>
</dbReference>
<dbReference type="NCBIfam" id="TIGR01484">
    <property type="entry name" value="HAD-SF-IIB"/>
    <property type="match status" value="1"/>
</dbReference>
<dbReference type="NCBIfam" id="TIGR00685">
    <property type="entry name" value="T6PP"/>
    <property type="match status" value="1"/>
</dbReference>
<dbReference type="PANTHER" id="PTHR43768">
    <property type="entry name" value="TREHALOSE 6-PHOSPHATE PHOSPHATASE"/>
    <property type="match status" value="1"/>
</dbReference>
<dbReference type="PANTHER" id="PTHR43768:SF3">
    <property type="entry name" value="TREHALOSE 6-PHOSPHATE PHOSPHATASE"/>
    <property type="match status" value="1"/>
</dbReference>
<dbReference type="Pfam" id="PF02358">
    <property type="entry name" value="Trehalose_PPase"/>
    <property type="match status" value="1"/>
</dbReference>
<dbReference type="SUPFAM" id="SSF56784">
    <property type="entry name" value="HAD-like"/>
    <property type="match status" value="2"/>
</dbReference>
<gene>
    <name type="primary">otsB</name>
    <name type="ordered locus">MMAR_1156</name>
</gene>
<reference key="1">
    <citation type="journal article" date="2008" name="Genome Res.">
        <title>Insights from the complete genome sequence of Mycobacterium marinum on the evolution of Mycobacterium tuberculosis.</title>
        <authorList>
            <person name="Stinear T.P."/>
            <person name="Seemann T."/>
            <person name="Harrison P.F."/>
            <person name="Jenkin G.A."/>
            <person name="Davies J.K."/>
            <person name="Johnson P.D."/>
            <person name="Abdellah Z."/>
            <person name="Arrowsmith C."/>
            <person name="Chillingworth T."/>
            <person name="Churcher C."/>
            <person name="Clarke K."/>
            <person name="Cronin A."/>
            <person name="Davis P."/>
            <person name="Goodhead I."/>
            <person name="Holroyd N."/>
            <person name="Jagels K."/>
            <person name="Lord A."/>
            <person name="Moule S."/>
            <person name="Mungall K."/>
            <person name="Norbertczak H."/>
            <person name="Quail M.A."/>
            <person name="Rabbinowitsch E."/>
            <person name="Walker D."/>
            <person name="White B."/>
            <person name="Whitehead S."/>
            <person name="Small P.L."/>
            <person name="Brosch R."/>
            <person name="Ramakrishnan L."/>
            <person name="Fischbach M.A."/>
            <person name="Parkhill J."/>
            <person name="Cole S.T."/>
        </authorList>
    </citation>
    <scope>NUCLEOTIDE SEQUENCE [LARGE SCALE GENOMIC DNA]</scope>
    <source>
        <strain>ATCC BAA-535 / M</strain>
    </source>
</reference>
<accession>B2HDP8</accession>
<protein>
    <recommendedName>
        <fullName>Trehalose-phosphate phosphatase</fullName>
        <shortName>TPP</shortName>
        <ecNumber>3.1.3.12</ecNumber>
    </recommendedName>
    <alternativeName>
        <fullName>Trehalose-6-phosphate phosphatase</fullName>
    </alternativeName>
</protein>